<reference key="1">
    <citation type="journal article" date="2008" name="J. Bacteriol.">
        <title>Insights into the environmental resistance gene pool from the genome sequence of the multidrug-resistant environmental isolate Escherichia coli SMS-3-5.</title>
        <authorList>
            <person name="Fricke W.F."/>
            <person name="Wright M.S."/>
            <person name="Lindell A.H."/>
            <person name="Harkins D.M."/>
            <person name="Baker-Austin C."/>
            <person name="Ravel J."/>
            <person name="Stepanauskas R."/>
        </authorList>
    </citation>
    <scope>NUCLEOTIDE SEQUENCE [LARGE SCALE GENOMIC DNA]</scope>
    <source>
        <strain>SMS-3-5 / SECEC</strain>
    </source>
</reference>
<organism>
    <name type="scientific">Escherichia coli (strain SMS-3-5 / SECEC)</name>
    <dbReference type="NCBI Taxonomy" id="439855"/>
    <lineage>
        <taxon>Bacteria</taxon>
        <taxon>Pseudomonadati</taxon>
        <taxon>Pseudomonadota</taxon>
        <taxon>Gammaproteobacteria</taxon>
        <taxon>Enterobacterales</taxon>
        <taxon>Enterobacteriaceae</taxon>
        <taxon>Escherichia</taxon>
    </lineage>
</organism>
<gene>
    <name evidence="1" type="primary">glgC</name>
    <name type="ordered locus">EcSMS35_3712</name>
</gene>
<proteinExistence type="inferred from homology"/>
<protein>
    <recommendedName>
        <fullName evidence="1">Glucose-1-phosphate adenylyltransferase</fullName>
        <ecNumber evidence="1">2.7.7.27</ecNumber>
    </recommendedName>
    <alternativeName>
        <fullName evidence="1">ADP-glucose pyrophosphorylase</fullName>
        <shortName evidence="1">ADPGlc PPase</shortName>
    </alternativeName>
    <alternativeName>
        <fullName evidence="1">ADP-glucose synthase</fullName>
    </alternativeName>
</protein>
<dbReference type="EC" id="2.7.7.27" evidence="1"/>
<dbReference type="EMBL" id="CP000970">
    <property type="protein sequence ID" value="ACB18018.1"/>
    <property type="molecule type" value="Genomic_DNA"/>
</dbReference>
<dbReference type="RefSeq" id="WP_000253975.1">
    <property type="nucleotide sequence ID" value="NC_010498.1"/>
</dbReference>
<dbReference type="SMR" id="B1LI91"/>
<dbReference type="GeneID" id="93778559"/>
<dbReference type="KEGG" id="ecm:EcSMS35_3712"/>
<dbReference type="HOGENOM" id="CLU_029499_14_1_6"/>
<dbReference type="UniPathway" id="UPA00164"/>
<dbReference type="Proteomes" id="UP000007011">
    <property type="component" value="Chromosome"/>
</dbReference>
<dbReference type="GO" id="GO:0005524">
    <property type="term" value="F:ATP binding"/>
    <property type="evidence" value="ECO:0007669"/>
    <property type="project" value="UniProtKB-KW"/>
</dbReference>
<dbReference type="GO" id="GO:0008878">
    <property type="term" value="F:glucose-1-phosphate adenylyltransferase activity"/>
    <property type="evidence" value="ECO:0007669"/>
    <property type="project" value="UniProtKB-UniRule"/>
</dbReference>
<dbReference type="GO" id="GO:0005978">
    <property type="term" value="P:glycogen biosynthetic process"/>
    <property type="evidence" value="ECO:0007669"/>
    <property type="project" value="UniProtKB-UniRule"/>
</dbReference>
<dbReference type="CDD" id="cd02508">
    <property type="entry name" value="ADP_Glucose_PP"/>
    <property type="match status" value="1"/>
</dbReference>
<dbReference type="CDD" id="cd04651">
    <property type="entry name" value="LbH_G1P_AT_C"/>
    <property type="match status" value="1"/>
</dbReference>
<dbReference type="FunFam" id="2.160.10.10:FF:000006">
    <property type="entry name" value="Glucose-1-phosphate adenylyltransferase"/>
    <property type="match status" value="1"/>
</dbReference>
<dbReference type="FunFam" id="3.90.550.10:FF:000014">
    <property type="entry name" value="Glucose-1-phosphate adenylyltransferase"/>
    <property type="match status" value="1"/>
</dbReference>
<dbReference type="Gene3D" id="2.160.10.10">
    <property type="entry name" value="Hexapeptide repeat proteins"/>
    <property type="match status" value="1"/>
</dbReference>
<dbReference type="Gene3D" id="3.90.550.10">
    <property type="entry name" value="Spore Coat Polysaccharide Biosynthesis Protein SpsA, Chain A"/>
    <property type="match status" value="1"/>
</dbReference>
<dbReference type="HAMAP" id="MF_00624">
    <property type="entry name" value="GlgC"/>
    <property type="match status" value="1"/>
</dbReference>
<dbReference type="InterPro" id="IPR011831">
    <property type="entry name" value="ADP-Glc_PPase"/>
</dbReference>
<dbReference type="InterPro" id="IPR005836">
    <property type="entry name" value="ADP_Glu_pyroP_CS"/>
</dbReference>
<dbReference type="InterPro" id="IPR023049">
    <property type="entry name" value="GlgC_bac"/>
</dbReference>
<dbReference type="InterPro" id="IPR056818">
    <property type="entry name" value="GlmU/GlgC-like_hexapep"/>
</dbReference>
<dbReference type="InterPro" id="IPR005835">
    <property type="entry name" value="NTP_transferase_dom"/>
</dbReference>
<dbReference type="InterPro" id="IPR029044">
    <property type="entry name" value="Nucleotide-diphossugar_trans"/>
</dbReference>
<dbReference type="InterPro" id="IPR011004">
    <property type="entry name" value="Trimer_LpxA-like_sf"/>
</dbReference>
<dbReference type="NCBIfam" id="TIGR02091">
    <property type="entry name" value="glgC"/>
    <property type="match status" value="1"/>
</dbReference>
<dbReference type="NCBIfam" id="NF001947">
    <property type="entry name" value="PRK00725.1"/>
    <property type="match status" value="1"/>
</dbReference>
<dbReference type="NCBIfam" id="NF002023">
    <property type="entry name" value="PRK00844.1"/>
    <property type="match status" value="1"/>
</dbReference>
<dbReference type="PANTHER" id="PTHR43523:SF2">
    <property type="entry name" value="GLUCOSE-1-PHOSPHATE ADENYLYLTRANSFERASE"/>
    <property type="match status" value="1"/>
</dbReference>
<dbReference type="PANTHER" id="PTHR43523">
    <property type="entry name" value="GLUCOSE-1-PHOSPHATE ADENYLYLTRANSFERASE-RELATED"/>
    <property type="match status" value="1"/>
</dbReference>
<dbReference type="Pfam" id="PF24894">
    <property type="entry name" value="Hexapep_GlmU"/>
    <property type="match status" value="1"/>
</dbReference>
<dbReference type="Pfam" id="PF00483">
    <property type="entry name" value="NTP_transferase"/>
    <property type="match status" value="1"/>
</dbReference>
<dbReference type="SUPFAM" id="SSF53448">
    <property type="entry name" value="Nucleotide-diphospho-sugar transferases"/>
    <property type="match status" value="1"/>
</dbReference>
<dbReference type="SUPFAM" id="SSF51161">
    <property type="entry name" value="Trimeric LpxA-like enzymes"/>
    <property type="match status" value="1"/>
</dbReference>
<dbReference type="PROSITE" id="PS00808">
    <property type="entry name" value="ADP_GLC_PYROPHOSPH_1"/>
    <property type="match status" value="1"/>
</dbReference>
<dbReference type="PROSITE" id="PS00809">
    <property type="entry name" value="ADP_GLC_PYROPHOSPH_2"/>
    <property type="match status" value="1"/>
</dbReference>
<dbReference type="PROSITE" id="PS00810">
    <property type="entry name" value="ADP_GLC_PYROPHOSPH_3"/>
    <property type="match status" value="1"/>
</dbReference>
<evidence type="ECO:0000255" key="1">
    <source>
        <dbReference type="HAMAP-Rule" id="MF_00624"/>
    </source>
</evidence>
<name>GLGC_ECOSM</name>
<keyword id="KW-0021">Allosteric enzyme</keyword>
<keyword id="KW-0067">ATP-binding</keyword>
<keyword id="KW-0119">Carbohydrate metabolism</keyword>
<keyword id="KW-0320">Glycogen biosynthesis</keyword>
<keyword id="KW-0321">Glycogen metabolism</keyword>
<keyword id="KW-0547">Nucleotide-binding</keyword>
<keyword id="KW-0548">Nucleotidyltransferase</keyword>
<keyword id="KW-0808">Transferase</keyword>
<feature type="chain" id="PRO_1000130482" description="Glucose-1-phosphate adenylyltransferase">
    <location>
        <begin position="1"/>
        <end position="431"/>
    </location>
</feature>
<feature type="binding site" evidence="1">
    <location>
        <position position="39"/>
    </location>
    <ligand>
        <name>beta-D-fructose 1,6-bisphosphate</name>
        <dbReference type="ChEBI" id="CHEBI:32966"/>
    </ligand>
</feature>
<feature type="binding site" evidence="1">
    <location>
        <position position="40"/>
    </location>
    <ligand>
        <name>AMP</name>
        <dbReference type="ChEBI" id="CHEBI:456215"/>
    </ligand>
</feature>
<feature type="binding site" evidence="1">
    <location>
        <position position="46"/>
    </location>
    <ligand>
        <name>AMP</name>
        <dbReference type="ChEBI" id="CHEBI:456215"/>
    </ligand>
</feature>
<feature type="binding site" evidence="1">
    <location>
        <position position="52"/>
    </location>
    <ligand>
        <name>AMP</name>
        <dbReference type="ChEBI" id="CHEBI:456215"/>
    </ligand>
</feature>
<feature type="binding site" evidence="1">
    <location>
        <position position="114"/>
    </location>
    <ligand>
        <name>alpha-D-glucose 1-phosphate</name>
        <dbReference type="ChEBI" id="CHEBI:58601"/>
    </ligand>
</feature>
<feature type="binding site" evidence="1">
    <location>
        <position position="130"/>
    </location>
    <ligand>
        <name>AMP</name>
        <dbReference type="ChEBI" id="CHEBI:456215"/>
    </ligand>
</feature>
<feature type="binding site" evidence="1">
    <location>
        <position position="179"/>
    </location>
    <ligand>
        <name>alpha-D-glucose 1-phosphate</name>
        <dbReference type="ChEBI" id="CHEBI:58601"/>
    </ligand>
</feature>
<feature type="binding site" evidence="1">
    <location>
        <begin position="194"/>
        <end position="195"/>
    </location>
    <ligand>
        <name>alpha-D-glucose 1-phosphate</name>
        <dbReference type="ChEBI" id="CHEBI:58601"/>
    </ligand>
</feature>
<feature type="binding site" evidence="1">
    <location>
        <position position="212"/>
    </location>
    <ligand>
        <name>alpha-D-glucose 1-phosphate</name>
        <dbReference type="ChEBI" id="CHEBI:58601"/>
    </ligand>
</feature>
<feature type="binding site" evidence="1">
    <location>
        <position position="370"/>
    </location>
    <ligand>
        <name>AMP</name>
        <dbReference type="ChEBI" id="CHEBI:456215"/>
    </ligand>
</feature>
<feature type="binding site" evidence="1">
    <location>
        <position position="386"/>
    </location>
    <ligand>
        <name>AMP</name>
        <dbReference type="ChEBI" id="CHEBI:456215"/>
    </ligand>
</feature>
<feature type="binding site" evidence="1">
    <location>
        <begin position="419"/>
        <end position="423"/>
    </location>
    <ligand>
        <name>beta-D-fructose 1,6-bisphosphate</name>
        <dbReference type="ChEBI" id="CHEBI:32966"/>
    </ligand>
</feature>
<feature type="binding site" evidence="1">
    <location>
        <begin position="429"/>
        <end position="431"/>
    </location>
    <ligand>
        <name>beta-D-fructose 1,6-bisphosphate</name>
        <dbReference type="ChEBI" id="CHEBI:32966"/>
    </ligand>
</feature>
<feature type="site" description="Could play a key role in the communication between the regulatory and the substrate sites" evidence="1">
    <location>
        <position position="74"/>
    </location>
</feature>
<feature type="site" description="Could play a key role in the communication between the regulatory and the substrate sites" evidence="1">
    <location>
        <position position="113"/>
    </location>
</feature>
<accession>B1LI91</accession>
<comment type="function">
    <text evidence="1">Involved in the biosynthesis of ADP-glucose, a building block required for the elongation reactions to produce glycogen. Catalyzes the reaction between ATP and alpha-D-glucose 1-phosphate (G1P) to produce pyrophosphate and ADP-Glc.</text>
</comment>
<comment type="catalytic activity">
    <reaction evidence="1">
        <text>alpha-D-glucose 1-phosphate + ATP + H(+) = ADP-alpha-D-glucose + diphosphate</text>
        <dbReference type="Rhea" id="RHEA:12120"/>
        <dbReference type="ChEBI" id="CHEBI:15378"/>
        <dbReference type="ChEBI" id="CHEBI:30616"/>
        <dbReference type="ChEBI" id="CHEBI:33019"/>
        <dbReference type="ChEBI" id="CHEBI:57498"/>
        <dbReference type="ChEBI" id="CHEBI:58601"/>
        <dbReference type="EC" id="2.7.7.27"/>
    </reaction>
</comment>
<comment type="activity regulation">
    <text evidence="1">Allosterically activated by fructose-1,6-bisphosphate (F16BP) and inhibited by AMP.</text>
</comment>
<comment type="pathway">
    <text evidence="1">Glycan biosynthesis; glycogen biosynthesis.</text>
</comment>
<comment type="subunit">
    <text evidence="1">Homotetramer.</text>
</comment>
<comment type="similarity">
    <text evidence="1">Belongs to the bacterial/plant glucose-1-phosphate adenylyltransferase family.</text>
</comment>
<sequence>MVSLEKNDHLMLARQLPLKSVALILAGGRGTRLKDLTNKRAKPAVHFGGKFRIIDFALSNCINSGIRRMGVITQYQSHTLVQHIQRGWSFFNEEMNEFVDLLPAQQRMKGENWYRGTADAVTQNLDIIRRYKAEYVVILAGDHIYKQDYSRMLIDHVEKGARCTVACMPVPIEEASAFGVMAVDENDKIIEFVEKPANPPSMPNDPSKSLASMGIYVFDADYLYELLEEDDRDENSSHDFGKDLIPKITEAGLAYAHPFPLSCVQSDPDAEPYWRDVGTLEAYWKANLDLASVVPELDMYDRNWPIRTYNESLPPAKFVQDRSGSHGMTLNSLVSGGCVISGSVVVQSVLFSRVRVNSFCNIDSAVLLPEVWVGRSCRLRRCVIDRACVIPEGMVIGENAEEDARRFYRSEEGIVLVTREMLRKLGHKQER</sequence>